<reference key="1">
    <citation type="submission" date="2005-09" db="EMBL/GenBank/DDBJ databases">
        <title>The chloroplast genome of mulberry: structural features and comparative analysis.</title>
        <authorList>
            <person name="Ravi V."/>
            <person name="Khurana J.P."/>
            <person name="Tyagi A.K."/>
            <person name="Khurana P."/>
        </authorList>
    </citation>
    <scope>NUCLEOTIDE SEQUENCE [LARGE SCALE GENOMIC DNA]</scope>
    <source>
        <strain>cv. K2</strain>
    </source>
</reference>
<sequence length="167" mass="19501">MFPMITGFMNYGQQTVRAARYIGQSFMITLSHVNRLPITIQYPYEKVIAAERFRGRIHFEFDKCIACEVCVRVCPIDLPVVDWKLETDIRKKQLLNYSIDFGICIFCGNCVEYCPTNCLSMTEEYELSTYDRHELNYNQIALGRLPMSVIDDYTIRTILNSPQIKNK</sequence>
<comment type="function">
    <text evidence="1">NDH shuttles electrons from NAD(P)H:plastoquinone, via FMN and iron-sulfur (Fe-S) centers, to quinones in the photosynthetic chain and possibly in a chloroplast respiratory chain. The immediate electron acceptor for the enzyme in this species is believed to be plastoquinone. Couples the redox reaction to proton translocation, and thus conserves the redox energy in a proton gradient.</text>
</comment>
<comment type="catalytic activity">
    <reaction evidence="1">
        <text>a plastoquinone + NADH + (n+1) H(+)(in) = a plastoquinol + NAD(+) + n H(+)(out)</text>
        <dbReference type="Rhea" id="RHEA:42608"/>
        <dbReference type="Rhea" id="RHEA-COMP:9561"/>
        <dbReference type="Rhea" id="RHEA-COMP:9562"/>
        <dbReference type="ChEBI" id="CHEBI:15378"/>
        <dbReference type="ChEBI" id="CHEBI:17757"/>
        <dbReference type="ChEBI" id="CHEBI:57540"/>
        <dbReference type="ChEBI" id="CHEBI:57945"/>
        <dbReference type="ChEBI" id="CHEBI:62192"/>
    </reaction>
</comment>
<comment type="catalytic activity">
    <reaction evidence="1">
        <text>a plastoquinone + NADPH + (n+1) H(+)(in) = a plastoquinol + NADP(+) + n H(+)(out)</text>
        <dbReference type="Rhea" id="RHEA:42612"/>
        <dbReference type="Rhea" id="RHEA-COMP:9561"/>
        <dbReference type="Rhea" id="RHEA-COMP:9562"/>
        <dbReference type="ChEBI" id="CHEBI:15378"/>
        <dbReference type="ChEBI" id="CHEBI:17757"/>
        <dbReference type="ChEBI" id="CHEBI:57783"/>
        <dbReference type="ChEBI" id="CHEBI:58349"/>
        <dbReference type="ChEBI" id="CHEBI:62192"/>
    </reaction>
</comment>
<comment type="cofactor">
    <cofactor evidence="1">
        <name>[4Fe-4S] cluster</name>
        <dbReference type="ChEBI" id="CHEBI:49883"/>
    </cofactor>
    <text evidence="1">Binds 2 [4Fe-4S] clusters per subunit.</text>
</comment>
<comment type="subunit">
    <text evidence="1">NDH is composed of at least 16 different subunits, 5 of which are encoded in the nucleus.</text>
</comment>
<comment type="subcellular location">
    <subcellularLocation>
        <location evidence="1">Plastid</location>
        <location evidence="1">Chloroplast thylakoid membrane</location>
        <topology evidence="1">Peripheral membrane protein</topology>
    </subcellularLocation>
</comment>
<comment type="similarity">
    <text evidence="1">Belongs to the complex I 23 kDa subunit family.</text>
</comment>
<evidence type="ECO:0000255" key="1">
    <source>
        <dbReference type="HAMAP-Rule" id="MF_01351"/>
    </source>
</evidence>
<keyword id="KW-0004">4Fe-4S</keyword>
<keyword id="KW-0150">Chloroplast</keyword>
<keyword id="KW-0408">Iron</keyword>
<keyword id="KW-0411">Iron-sulfur</keyword>
<keyword id="KW-0472">Membrane</keyword>
<keyword id="KW-0479">Metal-binding</keyword>
<keyword id="KW-0520">NAD</keyword>
<keyword id="KW-0521">NADP</keyword>
<keyword id="KW-0934">Plastid</keyword>
<keyword id="KW-0618">Plastoquinone</keyword>
<keyword id="KW-0874">Quinone</keyword>
<keyword id="KW-0677">Repeat</keyword>
<keyword id="KW-0793">Thylakoid</keyword>
<keyword id="KW-1278">Translocase</keyword>
<gene>
    <name evidence="1" type="primary">ndhI</name>
    <name type="ordered locus">MoinCp075</name>
</gene>
<organism>
    <name type="scientific">Morus indica</name>
    <name type="common">Mulberry</name>
    <dbReference type="NCBI Taxonomy" id="248361"/>
    <lineage>
        <taxon>Eukaryota</taxon>
        <taxon>Viridiplantae</taxon>
        <taxon>Streptophyta</taxon>
        <taxon>Embryophyta</taxon>
        <taxon>Tracheophyta</taxon>
        <taxon>Spermatophyta</taxon>
        <taxon>Magnoliopsida</taxon>
        <taxon>eudicotyledons</taxon>
        <taxon>Gunneridae</taxon>
        <taxon>Pentapetalae</taxon>
        <taxon>rosids</taxon>
        <taxon>fabids</taxon>
        <taxon>Rosales</taxon>
        <taxon>Moraceae</taxon>
        <taxon>Moreae</taxon>
        <taxon>Morus</taxon>
    </lineage>
</organism>
<protein>
    <recommendedName>
        <fullName evidence="1">NAD(P)H-quinone oxidoreductase subunit I, chloroplastic</fullName>
        <ecNumber evidence="1">7.1.1.-</ecNumber>
    </recommendedName>
    <alternativeName>
        <fullName evidence="1">NAD(P)H dehydrogenase subunit I</fullName>
        <shortName evidence="1">NDH subunit I</shortName>
    </alternativeName>
    <alternativeName>
        <fullName evidence="1">NADH-plastoquinone oxidoreductase subunit I</fullName>
    </alternativeName>
</protein>
<geneLocation type="chloroplast"/>
<name>NDHI_MORIN</name>
<dbReference type="EC" id="7.1.1.-" evidence="1"/>
<dbReference type="EMBL" id="DQ226511">
    <property type="protein sequence ID" value="ABB21010.1"/>
    <property type="molecule type" value="Genomic_DNA"/>
</dbReference>
<dbReference type="RefSeq" id="YP_762314.1">
    <property type="nucleotide sequence ID" value="NC_008359.1"/>
</dbReference>
<dbReference type="SMR" id="Q09WW4"/>
<dbReference type="GeneID" id="4290611"/>
<dbReference type="GO" id="GO:0009535">
    <property type="term" value="C:chloroplast thylakoid membrane"/>
    <property type="evidence" value="ECO:0007669"/>
    <property type="project" value="UniProtKB-SubCell"/>
</dbReference>
<dbReference type="GO" id="GO:0051539">
    <property type="term" value="F:4 iron, 4 sulfur cluster binding"/>
    <property type="evidence" value="ECO:0007669"/>
    <property type="project" value="UniProtKB-KW"/>
</dbReference>
<dbReference type="GO" id="GO:0005506">
    <property type="term" value="F:iron ion binding"/>
    <property type="evidence" value="ECO:0007669"/>
    <property type="project" value="UniProtKB-UniRule"/>
</dbReference>
<dbReference type="GO" id="GO:0008137">
    <property type="term" value="F:NADH dehydrogenase (ubiquinone) activity"/>
    <property type="evidence" value="ECO:0007669"/>
    <property type="project" value="InterPro"/>
</dbReference>
<dbReference type="GO" id="GO:0048038">
    <property type="term" value="F:quinone binding"/>
    <property type="evidence" value="ECO:0007669"/>
    <property type="project" value="UniProtKB-KW"/>
</dbReference>
<dbReference type="GO" id="GO:0019684">
    <property type="term" value="P:photosynthesis, light reaction"/>
    <property type="evidence" value="ECO:0007669"/>
    <property type="project" value="UniProtKB-UniRule"/>
</dbReference>
<dbReference type="FunFam" id="3.30.70.3270:FF:000006">
    <property type="entry name" value="NAD(P)H-quinone oxidoreductase subunit I, chloroplastic"/>
    <property type="match status" value="1"/>
</dbReference>
<dbReference type="Gene3D" id="3.30.70.3270">
    <property type="match status" value="1"/>
</dbReference>
<dbReference type="HAMAP" id="MF_01351">
    <property type="entry name" value="NDH1_NuoI"/>
    <property type="match status" value="1"/>
</dbReference>
<dbReference type="InterPro" id="IPR017896">
    <property type="entry name" value="4Fe4S_Fe-S-bd"/>
</dbReference>
<dbReference type="InterPro" id="IPR017900">
    <property type="entry name" value="4Fe4S_Fe_S_CS"/>
</dbReference>
<dbReference type="InterPro" id="IPR010226">
    <property type="entry name" value="NADH_quinone_OxRdtase_chainI"/>
</dbReference>
<dbReference type="InterPro" id="IPR004497">
    <property type="entry name" value="NDHI"/>
</dbReference>
<dbReference type="NCBIfam" id="TIGR00403">
    <property type="entry name" value="ndhI"/>
    <property type="match status" value="1"/>
</dbReference>
<dbReference type="NCBIfam" id="TIGR01971">
    <property type="entry name" value="NuoI"/>
    <property type="match status" value="1"/>
</dbReference>
<dbReference type="NCBIfam" id="NF004537">
    <property type="entry name" value="PRK05888.1-3"/>
    <property type="match status" value="1"/>
</dbReference>
<dbReference type="PANTHER" id="PTHR47275">
    <property type="entry name" value="NAD(P)H-QUINONE OXIDOREDUCTASE SUBUNIT I, CHLOROPLASTIC"/>
    <property type="match status" value="1"/>
</dbReference>
<dbReference type="PANTHER" id="PTHR47275:SF1">
    <property type="entry name" value="NAD(P)H-QUINONE OXIDOREDUCTASE SUBUNIT I, CHLOROPLASTIC"/>
    <property type="match status" value="1"/>
</dbReference>
<dbReference type="Pfam" id="PF13187">
    <property type="entry name" value="Fer4_9"/>
    <property type="match status" value="1"/>
</dbReference>
<dbReference type="SUPFAM" id="SSF54862">
    <property type="entry name" value="4Fe-4S ferredoxins"/>
    <property type="match status" value="1"/>
</dbReference>
<dbReference type="PROSITE" id="PS00198">
    <property type="entry name" value="4FE4S_FER_1"/>
    <property type="match status" value="2"/>
</dbReference>
<dbReference type="PROSITE" id="PS51379">
    <property type="entry name" value="4FE4S_FER_2"/>
    <property type="match status" value="2"/>
</dbReference>
<proteinExistence type="inferred from homology"/>
<feature type="chain" id="PRO_0000275477" description="NAD(P)H-quinone oxidoreductase subunit I, chloroplastic">
    <location>
        <begin position="1"/>
        <end position="167"/>
    </location>
</feature>
<feature type="domain" description="4Fe-4S ferredoxin-type 1" evidence="1">
    <location>
        <begin position="55"/>
        <end position="84"/>
    </location>
</feature>
<feature type="domain" description="4Fe-4S ferredoxin-type 2" evidence="1">
    <location>
        <begin position="95"/>
        <end position="124"/>
    </location>
</feature>
<feature type="binding site" evidence="1">
    <location>
        <position position="64"/>
    </location>
    <ligand>
        <name>[4Fe-4S] cluster</name>
        <dbReference type="ChEBI" id="CHEBI:49883"/>
        <label>1</label>
    </ligand>
</feature>
<feature type="binding site" evidence="1">
    <location>
        <position position="67"/>
    </location>
    <ligand>
        <name>[4Fe-4S] cluster</name>
        <dbReference type="ChEBI" id="CHEBI:49883"/>
        <label>1</label>
    </ligand>
</feature>
<feature type="binding site" evidence="1">
    <location>
        <position position="70"/>
    </location>
    <ligand>
        <name>[4Fe-4S] cluster</name>
        <dbReference type="ChEBI" id="CHEBI:49883"/>
        <label>1</label>
    </ligand>
</feature>
<feature type="binding site" evidence="1">
    <location>
        <position position="74"/>
    </location>
    <ligand>
        <name>[4Fe-4S] cluster</name>
        <dbReference type="ChEBI" id="CHEBI:49883"/>
        <label>2</label>
    </ligand>
</feature>
<feature type="binding site" evidence="1">
    <location>
        <position position="104"/>
    </location>
    <ligand>
        <name>[4Fe-4S] cluster</name>
        <dbReference type="ChEBI" id="CHEBI:49883"/>
        <label>2</label>
    </ligand>
</feature>
<feature type="binding site" evidence="1">
    <location>
        <position position="107"/>
    </location>
    <ligand>
        <name>[4Fe-4S] cluster</name>
        <dbReference type="ChEBI" id="CHEBI:49883"/>
        <label>2</label>
    </ligand>
</feature>
<feature type="binding site" evidence="1">
    <location>
        <position position="110"/>
    </location>
    <ligand>
        <name>[4Fe-4S] cluster</name>
        <dbReference type="ChEBI" id="CHEBI:49883"/>
        <label>2</label>
    </ligand>
</feature>
<feature type="binding site" evidence="1">
    <location>
        <position position="114"/>
    </location>
    <ligand>
        <name>[4Fe-4S] cluster</name>
        <dbReference type="ChEBI" id="CHEBI:49883"/>
        <label>1</label>
    </ligand>
</feature>
<accession>Q09WW4</accession>